<evidence type="ECO:0000255" key="1">
    <source>
        <dbReference type="HAMAP-Rule" id="MF_00532"/>
    </source>
</evidence>
<evidence type="ECO:0000305" key="2"/>
<organism>
    <name type="scientific">Rhodococcus opacus (strain B4)</name>
    <dbReference type="NCBI Taxonomy" id="632772"/>
    <lineage>
        <taxon>Bacteria</taxon>
        <taxon>Bacillati</taxon>
        <taxon>Actinomycetota</taxon>
        <taxon>Actinomycetes</taxon>
        <taxon>Mycobacteriales</taxon>
        <taxon>Nocardiaceae</taxon>
        <taxon>Rhodococcus</taxon>
    </lineage>
</organism>
<reference key="1">
    <citation type="submission" date="2009-03" db="EMBL/GenBank/DDBJ databases">
        <title>Comparison of the complete genome sequences of Rhodococcus erythropolis PR4 and Rhodococcus opacus B4.</title>
        <authorList>
            <person name="Takarada H."/>
            <person name="Sekine M."/>
            <person name="Hosoyama A."/>
            <person name="Yamada R."/>
            <person name="Fujisawa T."/>
            <person name="Omata S."/>
            <person name="Shimizu A."/>
            <person name="Tsukatani N."/>
            <person name="Tanikawa S."/>
            <person name="Fujita N."/>
            <person name="Harayama S."/>
        </authorList>
    </citation>
    <scope>NUCLEOTIDE SEQUENCE [LARGE SCALE GENOMIC DNA]</scope>
    <source>
        <strain>B4</strain>
    </source>
</reference>
<gene>
    <name evidence="1" type="primary">rpsI</name>
    <name type="ordered locus">ROP_62310</name>
</gene>
<comment type="similarity">
    <text evidence="1">Belongs to the universal ribosomal protein uS9 family.</text>
</comment>
<proteinExistence type="inferred from homology"/>
<name>RS9_RHOOB</name>
<feature type="chain" id="PRO_1000146466" description="Small ribosomal subunit protein uS9">
    <location>
        <begin position="1"/>
        <end position="170"/>
    </location>
</feature>
<protein>
    <recommendedName>
        <fullName evidence="1">Small ribosomal subunit protein uS9</fullName>
    </recommendedName>
    <alternativeName>
        <fullName evidence="2">30S ribosomal protein S9</fullName>
    </alternativeName>
</protein>
<keyword id="KW-0687">Ribonucleoprotein</keyword>
<keyword id="KW-0689">Ribosomal protein</keyword>
<sequence length="170" mass="18554">MSNPEEITEVVEVAADEYVSVEEPEVAEDIEAAAAPQAPIVIDRPIQTVGRRKEAVVRVRLTPGSGDFKLNGRTIEDYFPNKVHQQLIKAPLVTVERAESFDIVALLHGGGPSGQAGALRLAIARALIEVTPEDRPALKSAGFLTRDARAVERKKYGLKKARKASQYSKR</sequence>
<accession>C1B057</accession>
<dbReference type="EMBL" id="AP011115">
    <property type="protein sequence ID" value="BAH54478.1"/>
    <property type="molecule type" value="Genomic_DNA"/>
</dbReference>
<dbReference type="SMR" id="C1B057"/>
<dbReference type="STRING" id="632772.ROP_62310"/>
<dbReference type="KEGG" id="rop:ROP_62310"/>
<dbReference type="PATRIC" id="fig|632772.20.peg.6507"/>
<dbReference type="HOGENOM" id="CLU_046483_2_0_11"/>
<dbReference type="Proteomes" id="UP000002212">
    <property type="component" value="Chromosome"/>
</dbReference>
<dbReference type="GO" id="GO:0005737">
    <property type="term" value="C:cytoplasm"/>
    <property type="evidence" value="ECO:0007669"/>
    <property type="project" value="UniProtKB-ARBA"/>
</dbReference>
<dbReference type="GO" id="GO:0015935">
    <property type="term" value="C:small ribosomal subunit"/>
    <property type="evidence" value="ECO:0007669"/>
    <property type="project" value="TreeGrafter"/>
</dbReference>
<dbReference type="GO" id="GO:0003723">
    <property type="term" value="F:RNA binding"/>
    <property type="evidence" value="ECO:0007669"/>
    <property type="project" value="TreeGrafter"/>
</dbReference>
<dbReference type="GO" id="GO:0003735">
    <property type="term" value="F:structural constituent of ribosome"/>
    <property type="evidence" value="ECO:0007669"/>
    <property type="project" value="InterPro"/>
</dbReference>
<dbReference type="GO" id="GO:0006412">
    <property type="term" value="P:translation"/>
    <property type="evidence" value="ECO:0007669"/>
    <property type="project" value="UniProtKB-UniRule"/>
</dbReference>
<dbReference type="FunFam" id="3.30.230.10:FF:000001">
    <property type="entry name" value="30S ribosomal protein S9"/>
    <property type="match status" value="1"/>
</dbReference>
<dbReference type="Gene3D" id="3.30.230.10">
    <property type="match status" value="1"/>
</dbReference>
<dbReference type="HAMAP" id="MF_00532_B">
    <property type="entry name" value="Ribosomal_uS9_B"/>
    <property type="match status" value="1"/>
</dbReference>
<dbReference type="InterPro" id="IPR020568">
    <property type="entry name" value="Ribosomal_Su5_D2-typ_SF"/>
</dbReference>
<dbReference type="InterPro" id="IPR000754">
    <property type="entry name" value="Ribosomal_uS9"/>
</dbReference>
<dbReference type="InterPro" id="IPR023035">
    <property type="entry name" value="Ribosomal_uS9_bac/plastid"/>
</dbReference>
<dbReference type="InterPro" id="IPR020574">
    <property type="entry name" value="Ribosomal_uS9_CS"/>
</dbReference>
<dbReference type="InterPro" id="IPR014721">
    <property type="entry name" value="Ribsml_uS5_D2-typ_fold_subgr"/>
</dbReference>
<dbReference type="NCBIfam" id="NF001099">
    <property type="entry name" value="PRK00132.1"/>
    <property type="match status" value="1"/>
</dbReference>
<dbReference type="PANTHER" id="PTHR21569">
    <property type="entry name" value="RIBOSOMAL PROTEIN S9"/>
    <property type="match status" value="1"/>
</dbReference>
<dbReference type="PANTHER" id="PTHR21569:SF1">
    <property type="entry name" value="SMALL RIBOSOMAL SUBUNIT PROTEIN US9M"/>
    <property type="match status" value="1"/>
</dbReference>
<dbReference type="Pfam" id="PF00380">
    <property type="entry name" value="Ribosomal_S9"/>
    <property type="match status" value="1"/>
</dbReference>
<dbReference type="SUPFAM" id="SSF54211">
    <property type="entry name" value="Ribosomal protein S5 domain 2-like"/>
    <property type="match status" value="1"/>
</dbReference>
<dbReference type="PROSITE" id="PS00360">
    <property type="entry name" value="RIBOSOMAL_S9"/>
    <property type="match status" value="1"/>
</dbReference>